<accession>B3DVZ6</accession>
<name>RS20_METI4</name>
<comment type="function">
    <text evidence="1">Binds directly to 16S ribosomal RNA.</text>
</comment>
<comment type="similarity">
    <text evidence="1">Belongs to the bacterial ribosomal protein bS20 family.</text>
</comment>
<reference key="1">
    <citation type="journal article" date="2008" name="Biol. Direct">
        <title>Complete genome sequence of the extremely acidophilic methanotroph isolate V4, Methylacidiphilum infernorum, a representative of the bacterial phylum Verrucomicrobia.</title>
        <authorList>
            <person name="Hou S."/>
            <person name="Makarova K.S."/>
            <person name="Saw J.H."/>
            <person name="Senin P."/>
            <person name="Ly B.V."/>
            <person name="Zhou Z."/>
            <person name="Ren Y."/>
            <person name="Wang J."/>
            <person name="Galperin M.Y."/>
            <person name="Omelchenko M.V."/>
            <person name="Wolf Y.I."/>
            <person name="Yutin N."/>
            <person name="Koonin E.V."/>
            <person name="Stott M.B."/>
            <person name="Mountain B.W."/>
            <person name="Crowe M.A."/>
            <person name="Smirnova A.V."/>
            <person name="Dunfield P.F."/>
            <person name="Feng L."/>
            <person name="Wang L."/>
            <person name="Alam M."/>
        </authorList>
    </citation>
    <scope>NUCLEOTIDE SEQUENCE [LARGE SCALE GENOMIC DNA]</scope>
    <source>
        <strain>Isolate V4</strain>
    </source>
</reference>
<dbReference type="EMBL" id="CP000975">
    <property type="protein sequence ID" value="ACD83499.1"/>
    <property type="molecule type" value="Genomic_DNA"/>
</dbReference>
<dbReference type="RefSeq" id="WP_012463781.1">
    <property type="nucleotide sequence ID" value="NC_010794.1"/>
</dbReference>
<dbReference type="SMR" id="B3DVZ6"/>
<dbReference type="STRING" id="481448.Minf_1445"/>
<dbReference type="KEGG" id="min:Minf_1445"/>
<dbReference type="eggNOG" id="COG0268">
    <property type="taxonomic scope" value="Bacteria"/>
</dbReference>
<dbReference type="HOGENOM" id="CLU_160655_3_1_0"/>
<dbReference type="Proteomes" id="UP000009149">
    <property type="component" value="Chromosome"/>
</dbReference>
<dbReference type="GO" id="GO:1990904">
    <property type="term" value="C:ribonucleoprotein complex"/>
    <property type="evidence" value="ECO:0007669"/>
    <property type="project" value="UniProtKB-KW"/>
</dbReference>
<dbReference type="GO" id="GO:0005840">
    <property type="term" value="C:ribosome"/>
    <property type="evidence" value="ECO:0007669"/>
    <property type="project" value="UniProtKB-KW"/>
</dbReference>
<dbReference type="GO" id="GO:0019843">
    <property type="term" value="F:rRNA binding"/>
    <property type="evidence" value="ECO:0007669"/>
    <property type="project" value="UniProtKB-UniRule"/>
</dbReference>
<dbReference type="GO" id="GO:0003735">
    <property type="term" value="F:structural constituent of ribosome"/>
    <property type="evidence" value="ECO:0007669"/>
    <property type="project" value="InterPro"/>
</dbReference>
<dbReference type="GO" id="GO:0006412">
    <property type="term" value="P:translation"/>
    <property type="evidence" value="ECO:0007669"/>
    <property type="project" value="UniProtKB-UniRule"/>
</dbReference>
<dbReference type="Gene3D" id="1.20.58.110">
    <property type="entry name" value="Ribosomal protein S20"/>
    <property type="match status" value="1"/>
</dbReference>
<dbReference type="HAMAP" id="MF_00500">
    <property type="entry name" value="Ribosomal_bS20"/>
    <property type="match status" value="1"/>
</dbReference>
<dbReference type="InterPro" id="IPR002583">
    <property type="entry name" value="Ribosomal_bS20"/>
</dbReference>
<dbReference type="InterPro" id="IPR036510">
    <property type="entry name" value="Ribosomal_bS20_sf"/>
</dbReference>
<dbReference type="NCBIfam" id="TIGR00029">
    <property type="entry name" value="S20"/>
    <property type="match status" value="1"/>
</dbReference>
<dbReference type="Pfam" id="PF01649">
    <property type="entry name" value="Ribosomal_S20p"/>
    <property type="match status" value="1"/>
</dbReference>
<dbReference type="SUPFAM" id="SSF46992">
    <property type="entry name" value="Ribosomal protein S20"/>
    <property type="match status" value="1"/>
</dbReference>
<evidence type="ECO:0000255" key="1">
    <source>
        <dbReference type="HAMAP-Rule" id="MF_00500"/>
    </source>
</evidence>
<evidence type="ECO:0000305" key="2"/>
<protein>
    <recommendedName>
        <fullName evidence="1">Small ribosomal subunit protein bS20</fullName>
    </recommendedName>
    <alternativeName>
        <fullName evidence="2">30S ribosomal protein S20</fullName>
    </alternativeName>
</protein>
<sequence length="92" mass="10877">MPNTKSAEKHQRKSQRKRIFNLRAKKELKEQIKQLKDLIEAKKKQEALAFFPKIQSLLDRLVKRKKLVANNANRKKRRLLEKIEKITGDGIS</sequence>
<feature type="chain" id="PRO_1000126475" description="Small ribosomal subunit protein bS20">
    <location>
        <begin position="1"/>
        <end position="92"/>
    </location>
</feature>
<keyword id="KW-0687">Ribonucleoprotein</keyword>
<keyword id="KW-0689">Ribosomal protein</keyword>
<keyword id="KW-0694">RNA-binding</keyword>
<keyword id="KW-0699">rRNA-binding</keyword>
<organism>
    <name type="scientific">Methylacidiphilum infernorum (isolate V4)</name>
    <name type="common">Methylokorus infernorum (strain V4)</name>
    <dbReference type="NCBI Taxonomy" id="481448"/>
    <lineage>
        <taxon>Bacteria</taxon>
        <taxon>Pseudomonadati</taxon>
        <taxon>Verrucomicrobiota</taxon>
        <taxon>Methylacidiphilae</taxon>
        <taxon>Methylacidiphilales</taxon>
        <taxon>Methylacidiphilaceae</taxon>
        <taxon>Methylacidiphilum (ex Ratnadevi et al. 2023)</taxon>
    </lineage>
</organism>
<gene>
    <name evidence="1" type="primary">rpsT</name>
    <name type="ordered locus">Minf_1445</name>
</gene>
<proteinExistence type="inferred from homology"/>